<proteinExistence type="inferred from homology"/>
<geneLocation type="chloroplast"/>
<organism>
    <name type="scientific">Festucopsis serpentini</name>
    <dbReference type="NCBI Taxonomy" id="72456"/>
    <lineage>
        <taxon>Eukaryota</taxon>
        <taxon>Viridiplantae</taxon>
        <taxon>Streptophyta</taxon>
        <taxon>Embryophyta</taxon>
        <taxon>Tracheophyta</taxon>
        <taxon>Spermatophyta</taxon>
        <taxon>Magnoliopsida</taxon>
        <taxon>Liliopsida</taxon>
        <taxon>Poales</taxon>
        <taxon>Poaceae</taxon>
        <taxon>BOP clade</taxon>
        <taxon>Pooideae</taxon>
        <taxon>Triticodae</taxon>
        <taxon>Triticeae</taxon>
        <taxon>Hordeinae</taxon>
        <taxon>Festucopsis</taxon>
    </lineage>
</organism>
<name>RPOA_FESSE</name>
<protein>
    <recommendedName>
        <fullName evidence="1">DNA-directed RNA polymerase subunit alpha</fullName>
        <shortName evidence="1">PEP</shortName>
        <ecNumber evidence="1">2.7.7.6</ecNumber>
    </recommendedName>
    <alternativeName>
        <fullName evidence="1">Plastid-encoded RNA polymerase subunit alpha</fullName>
        <shortName evidence="1">RNA polymerase subunit alpha</shortName>
    </alternativeName>
</protein>
<accession>P93956</accession>
<evidence type="ECO:0000255" key="1">
    <source>
        <dbReference type="HAMAP-Rule" id="MF_00059"/>
    </source>
</evidence>
<reference key="1">
    <citation type="journal article" date="1997" name="Mol. Phylogenet. Evol.">
        <title>Phylogenetic analysis of the Triticeae (Poaceae) based on rpoA sequence data.</title>
        <authorList>
            <person name="Petersen G."/>
            <person name="Seberg O."/>
        </authorList>
    </citation>
    <scope>NUCLEOTIDE SEQUENCE [GENOMIC DNA]</scope>
    <source>
        <strain>H6511</strain>
        <tissue>Leaf</tissue>
    </source>
</reference>
<feature type="chain" id="PRO_0000175457" description="DNA-directed RNA polymerase subunit alpha">
    <location>
        <begin position="1"/>
        <end position="339"/>
    </location>
</feature>
<feature type="region of interest" description="Alpha N-terminal domain (alpha-NTD)" evidence="1">
    <location>
        <begin position="1"/>
        <end position="233"/>
    </location>
</feature>
<feature type="region of interest" description="Alpha C-terminal domain (alpha-CTD)" evidence="1">
    <location>
        <begin position="264"/>
        <end position="339"/>
    </location>
</feature>
<gene>
    <name evidence="1" type="primary">rpoA</name>
</gene>
<comment type="function">
    <text evidence="1">DNA-dependent RNA polymerase catalyzes the transcription of DNA into RNA using the four ribonucleoside triphosphates as substrates.</text>
</comment>
<comment type="catalytic activity">
    <reaction evidence="1">
        <text>RNA(n) + a ribonucleoside 5'-triphosphate = RNA(n+1) + diphosphate</text>
        <dbReference type="Rhea" id="RHEA:21248"/>
        <dbReference type="Rhea" id="RHEA-COMP:14527"/>
        <dbReference type="Rhea" id="RHEA-COMP:17342"/>
        <dbReference type="ChEBI" id="CHEBI:33019"/>
        <dbReference type="ChEBI" id="CHEBI:61557"/>
        <dbReference type="ChEBI" id="CHEBI:140395"/>
        <dbReference type="EC" id="2.7.7.6"/>
    </reaction>
</comment>
<comment type="subunit">
    <text evidence="1">In plastids the minimal PEP RNA polymerase catalytic core is composed of four subunits: alpha, beta, beta', and beta''. When a (nuclear-encoded) sigma factor is associated with the core the holoenzyme is formed, which can initiate transcription.</text>
</comment>
<comment type="subcellular location">
    <subcellularLocation>
        <location>Plastid</location>
        <location>Chloroplast</location>
    </subcellularLocation>
</comment>
<comment type="domain">
    <text evidence="1">The N-terminal domain is essential for RNAP assembly and basal transcription, whereas the C-terminal domain is involved in interaction with transcriptional regulators and with upstream promoter elements.</text>
</comment>
<comment type="similarity">
    <text evidence="1">Belongs to the RNA polymerase alpha chain family.</text>
</comment>
<dbReference type="EC" id="2.7.7.6" evidence="1"/>
<dbReference type="EMBL" id="Z79501">
    <property type="protein sequence ID" value="CAB01778.1"/>
    <property type="molecule type" value="Genomic_DNA"/>
</dbReference>
<dbReference type="SMR" id="P93956"/>
<dbReference type="GO" id="GO:0009507">
    <property type="term" value="C:chloroplast"/>
    <property type="evidence" value="ECO:0007669"/>
    <property type="project" value="UniProtKB-SubCell"/>
</dbReference>
<dbReference type="GO" id="GO:0000428">
    <property type="term" value="C:DNA-directed RNA polymerase complex"/>
    <property type="evidence" value="ECO:0007669"/>
    <property type="project" value="UniProtKB-KW"/>
</dbReference>
<dbReference type="GO" id="GO:0005739">
    <property type="term" value="C:mitochondrion"/>
    <property type="evidence" value="ECO:0007669"/>
    <property type="project" value="GOC"/>
</dbReference>
<dbReference type="GO" id="GO:0003677">
    <property type="term" value="F:DNA binding"/>
    <property type="evidence" value="ECO:0007669"/>
    <property type="project" value="UniProtKB-UniRule"/>
</dbReference>
<dbReference type="GO" id="GO:0003899">
    <property type="term" value="F:DNA-directed RNA polymerase activity"/>
    <property type="evidence" value="ECO:0007669"/>
    <property type="project" value="UniProtKB-UniRule"/>
</dbReference>
<dbReference type="GO" id="GO:0046983">
    <property type="term" value="F:protein dimerization activity"/>
    <property type="evidence" value="ECO:0007669"/>
    <property type="project" value="InterPro"/>
</dbReference>
<dbReference type="GO" id="GO:0006351">
    <property type="term" value="P:DNA-templated transcription"/>
    <property type="evidence" value="ECO:0007669"/>
    <property type="project" value="UniProtKB-UniRule"/>
</dbReference>
<dbReference type="CDD" id="cd06928">
    <property type="entry name" value="RNAP_alpha_NTD"/>
    <property type="match status" value="1"/>
</dbReference>
<dbReference type="FunFam" id="2.170.120.12:FF:000001">
    <property type="entry name" value="DNA-directed RNA polymerase subunit alpha"/>
    <property type="match status" value="1"/>
</dbReference>
<dbReference type="Gene3D" id="1.10.150.20">
    <property type="entry name" value="5' to 3' exonuclease, C-terminal subdomain"/>
    <property type="match status" value="1"/>
</dbReference>
<dbReference type="Gene3D" id="2.170.120.12">
    <property type="entry name" value="DNA-directed RNA polymerase, insert domain"/>
    <property type="match status" value="1"/>
</dbReference>
<dbReference type="Gene3D" id="3.30.1360.10">
    <property type="entry name" value="RNA polymerase, RBP11-like subunit"/>
    <property type="match status" value="1"/>
</dbReference>
<dbReference type="HAMAP" id="MF_00059">
    <property type="entry name" value="RNApol_bact_RpoA"/>
    <property type="match status" value="1"/>
</dbReference>
<dbReference type="InterPro" id="IPR011262">
    <property type="entry name" value="DNA-dir_RNA_pol_insert"/>
</dbReference>
<dbReference type="InterPro" id="IPR011263">
    <property type="entry name" value="DNA-dir_RNA_pol_RpoA/D/Rpb3"/>
</dbReference>
<dbReference type="InterPro" id="IPR011773">
    <property type="entry name" value="DNA-dir_RpoA"/>
</dbReference>
<dbReference type="InterPro" id="IPR036603">
    <property type="entry name" value="RBP11-like"/>
</dbReference>
<dbReference type="InterPro" id="IPR011260">
    <property type="entry name" value="RNAP_asu_C"/>
</dbReference>
<dbReference type="InterPro" id="IPR036643">
    <property type="entry name" value="RNApol_insert_sf"/>
</dbReference>
<dbReference type="NCBIfam" id="TIGR02027">
    <property type="entry name" value="rpoA"/>
    <property type="match status" value="1"/>
</dbReference>
<dbReference type="Pfam" id="PF01000">
    <property type="entry name" value="RNA_pol_A_bac"/>
    <property type="match status" value="1"/>
</dbReference>
<dbReference type="Pfam" id="PF03118">
    <property type="entry name" value="RNA_pol_A_CTD"/>
    <property type="match status" value="1"/>
</dbReference>
<dbReference type="Pfam" id="PF01193">
    <property type="entry name" value="RNA_pol_L"/>
    <property type="match status" value="1"/>
</dbReference>
<dbReference type="SMART" id="SM00662">
    <property type="entry name" value="RPOLD"/>
    <property type="match status" value="1"/>
</dbReference>
<dbReference type="SUPFAM" id="SSF47789">
    <property type="entry name" value="C-terminal domain of RNA polymerase alpha subunit"/>
    <property type="match status" value="1"/>
</dbReference>
<dbReference type="SUPFAM" id="SSF56553">
    <property type="entry name" value="Insert subdomain of RNA polymerase alpha subunit"/>
    <property type="match status" value="1"/>
</dbReference>
<dbReference type="SUPFAM" id="SSF55257">
    <property type="entry name" value="RBP11-like subunits of RNA polymerase"/>
    <property type="match status" value="1"/>
</dbReference>
<sequence>MVREEVAGSTQTLQWKCVESRVDSKRLYYGRFILSPLRKGQADTVGIALRRALLGEIEGTCITRAKFWSVPHEYSTIAGIEESVQEILLNLKEIVLRSNLYGVRDASICVKGPRYITAQDIILPPSVEIVDTAQPIANLTEPIDFCIDLQIKRDRGYQTELRKNYQDGSYPIDAVSMPVRNVNYSIFSCGNGNEKHEILFLEIWTNGSLTPKEALYEASRNLIDLFLPFLHAEEEGTSFEENKNRFTPPLFTFQKRLTNLKKNKKGIPLNCIFIDQLELTSRTYNCLKRANIHTLLDLLSKTEEDLLRIDSFRMEDRKHIWDTLEKHLPIDLLKNKLSF</sequence>
<keyword id="KW-0150">Chloroplast</keyword>
<keyword id="KW-0240">DNA-directed RNA polymerase</keyword>
<keyword id="KW-0548">Nucleotidyltransferase</keyword>
<keyword id="KW-0934">Plastid</keyword>
<keyword id="KW-0804">Transcription</keyword>
<keyword id="KW-0808">Transferase</keyword>